<dbReference type="EC" id="5.1.1.3" evidence="1"/>
<dbReference type="EMBL" id="CP000872">
    <property type="protein sequence ID" value="ABX62266.1"/>
    <property type="molecule type" value="Genomic_DNA"/>
</dbReference>
<dbReference type="RefSeq" id="WP_002964323.1">
    <property type="nucleotide sequence ID" value="NC_010103.1"/>
</dbReference>
<dbReference type="SMR" id="A9M5L1"/>
<dbReference type="GeneID" id="97533561"/>
<dbReference type="KEGG" id="bcs:BCAN_A1217"/>
<dbReference type="HOGENOM" id="CLU_052344_2_0_5"/>
<dbReference type="PhylomeDB" id="A9M5L1"/>
<dbReference type="UniPathway" id="UPA00219"/>
<dbReference type="Proteomes" id="UP000001385">
    <property type="component" value="Chromosome I"/>
</dbReference>
<dbReference type="GO" id="GO:0008881">
    <property type="term" value="F:glutamate racemase activity"/>
    <property type="evidence" value="ECO:0007669"/>
    <property type="project" value="UniProtKB-UniRule"/>
</dbReference>
<dbReference type="GO" id="GO:0071555">
    <property type="term" value="P:cell wall organization"/>
    <property type="evidence" value="ECO:0007669"/>
    <property type="project" value="UniProtKB-KW"/>
</dbReference>
<dbReference type="GO" id="GO:0009252">
    <property type="term" value="P:peptidoglycan biosynthetic process"/>
    <property type="evidence" value="ECO:0007669"/>
    <property type="project" value="UniProtKB-UniRule"/>
</dbReference>
<dbReference type="GO" id="GO:0008360">
    <property type="term" value="P:regulation of cell shape"/>
    <property type="evidence" value="ECO:0007669"/>
    <property type="project" value="UniProtKB-KW"/>
</dbReference>
<dbReference type="Gene3D" id="3.40.50.1860">
    <property type="match status" value="2"/>
</dbReference>
<dbReference type="HAMAP" id="MF_00258">
    <property type="entry name" value="Glu_racemase"/>
    <property type="match status" value="1"/>
</dbReference>
<dbReference type="InterPro" id="IPR015942">
    <property type="entry name" value="Asp/Glu/hydantoin_racemase"/>
</dbReference>
<dbReference type="InterPro" id="IPR001920">
    <property type="entry name" value="Asp/Glu_race"/>
</dbReference>
<dbReference type="InterPro" id="IPR018187">
    <property type="entry name" value="Asp/Glu_racemase_AS_1"/>
</dbReference>
<dbReference type="InterPro" id="IPR033134">
    <property type="entry name" value="Asp/Glu_racemase_AS_2"/>
</dbReference>
<dbReference type="InterPro" id="IPR004391">
    <property type="entry name" value="Glu_race"/>
</dbReference>
<dbReference type="NCBIfam" id="TIGR00067">
    <property type="entry name" value="glut_race"/>
    <property type="match status" value="1"/>
</dbReference>
<dbReference type="PANTHER" id="PTHR21198">
    <property type="entry name" value="GLUTAMATE RACEMASE"/>
    <property type="match status" value="1"/>
</dbReference>
<dbReference type="PANTHER" id="PTHR21198:SF2">
    <property type="entry name" value="GLUTAMATE RACEMASE"/>
    <property type="match status" value="1"/>
</dbReference>
<dbReference type="Pfam" id="PF01177">
    <property type="entry name" value="Asp_Glu_race"/>
    <property type="match status" value="1"/>
</dbReference>
<dbReference type="SUPFAM" id="SSF53681">
    <property type="entry name" value="Aspartate/glutamate racemase"/>
    <property type="match status" value="2"/>
</dbReference>
<dbReference type="PROSITE" id="PS00923">
    <property type="entry name" value="ASP_GLU_RACEMASE_1"/>
    <property type="match status" value="1"/>
</dbReference>
<dbReference type="PROSITE" id="PS00924">
    <property type="entry name" value="ASP_GLU_RACEMASE_2"/>
    <property type="match status" value="1"/>
</dbReference>
<comment type="function">
    <text evidence="1">Provides the (R)-glutamate required for cell wall biosynthesis.</text>
</comment>
<comment type="catalytic activity">
    <reaction evidence="1">
        <text>L-glutamate = D-glutamate</text>
        <dbReference type="Rhea" id="RHEA:12813"/>
        <dbReference type="ChEBI" id="CHEBI:29985"/>
        <dbReference type="ChEBI" id="CHEBI:29986"/>
        <dbReference type="EC" id="5.1.1.3"/>
    </reaction>
</comment>
<comment type="pathway">
    <text evidence="1">Cell wall biogenesis; peptidoglycan biosynthesis.</text>
</comment>
<comment type="similarity">
    <text evidence="1">Belongs to the aspartate/glutamate racemases family.</text>
</comment>
<gene>
    <name evidence="1" type="primary">murI</name>
    <name type="ordered locus">BCAN_A1217</name>
</gene>
<accession>A9M5L1</accession>
<keyword id="KW-0133">Cell shape</keyword>
<keyword id="KW-0961">Cell wall biogenesis/degradation</keyword>
<keyword id="KW-0413">Isomerase</keyword>
<keyword id="KW-0573">Peptidoglycan synthesis</keyword>
<keyword id="KW-1185">Reference proteome</keyword>
<reference key="1">
    <citation type="submission" date="2007-10" db="EMBL/GenBank/DDBJ databases">
        <title>Brucella canis ATCC 23365 whole genome shotgun sequencing project.</title>
        <authorList>
            <person name="Setubal J.C."/>
            <person name="Bowns C."/>
            <person name="Boyle S."/>
            <person name="Crasta O.R."/>
            <person name="Czar M.J."/>
            <person name="Dharmanolla C."/>
            <person name="Gillespie J.J."/>
            <person name="Kenyon R.W."/>
            <person name="Lu J."/>
            <person name="Mane S."/>
            <person name="Mohapatra S."/>
            <person name="Nagrani S."/>
            <person name="Purkayastha A."/>
            <person name="Rajasimha H.K."/>
            <person name="Shallom J.M."/>
            <person name="Shallom S."/>
            <person name="Shukla M."/>
            <person name="Snyder E.E."/>
            <person name="Sobral B.W."/>
            <person name="Wattam A.R."/>
            <person name="Will R."/>
            <person name="Williams K."/>
            <person name="Yoo H."/>
            <person name="Bruce D."/>
            <person name="Detter C."/>
            <person name="Munk C."/>
            <person name="Brettin T.S."/>
        </authorList>
    </citation>
    <scope>NUCLEOTIDE SEQUENCE [LARGE SCALE GENOMIC DNA]</scope>
    <source>
        <strain>ATCC 23365 / NCTC 10854 / RM-666</strain>
    </source>
</reference>
<proteinExistence type="inferred from homology"/>
<name>MURI_BRUC2</name>
<feature type="chain" id="PRO_1000078553" description="Glutamate racemase">
    <location>
        <begin position="1"/>
        <end position="277"/>
    </location>
</feature>
<feature type="active site" description="Proton donor/acceptor" evidence="1">
    <location>
        <position position="89"/>
    </location>
</feature>
<feature type="active site" description="Proton donor/acceptor" evidence="1">
    <location>
        <position position="204"/>
    </location>
</feature>
<feature type="binding site" evidence="1">
    <location>
        <begin position="25"/>
        <end position="26"/>
    </location>
    <ligand>
        <name>substrate</name>
    </ligand>
</feature>
<feature type="binding site" evidence="1">
    <location>
        <begin position="57"/>
        <end position="58"/>
    </location>
    <ligand>
        <name>substrate</name>
    </ligand>
</feature>
<feature type="binding site" evidence="1">
    <location>
        <begin position="90"/>
        <end position="91"/>
    </location>
    <ligand>
        <name>substrate</name>
    </ligand>
</feature>
<feature type="binding site" evidence="1">
    <location>
        <begin position="205"/>
        <end position="206"/>
    </location>
    <ligand>
        <name>substrate</name>
    </ligand>
</feature>
<protein>
    <recommendedName>
        <fullName evidence="1">Glutamate racemase</fullName>
        <ecNumber evidence="1">5.1.1.3</ecNumber>
    </recommendedName>
</protein>
<sequence length="277" mass="30708">MKKAPAGSFPAKPTIAPERPILVFDSGIGGLTVLREARVVMPDRRFVYIADDAGFPYGNWEEEALKRRIIELFGEFIANYDPEIAVIACNTASTLVLEDLRRAYPSVPFVGTVPAIKPAAERTSSGLVSVLATPGTVKRAYTRDLIQSFASRCHVRLVGADGLAAIAEAHIRGESFDEALVMAQIAPCFIEKDGKRTDIVVLACTHYPFLVNVLRRLAPWPVDWLDPAEAIARRMKSLLPARSDDDEFHSQDDLAFFTSRKPDYAIRRLMQGFGLRF</sequence>
<organism>
    <name type="scientific">Brucella canis (strain ATCC 23365 / NCTC 10854 / RM-666)</name>
    <dbReference type="NCBI Taxonomy" id="483179"/>
    <lineage>
        <taxon>Bacteria</taxon>
        <taxon>Pseudomonadati</taxon>
        <taxon>Pseudomonadota</taxon>
        <taxon>Alphaproteobacteria</taxon>
        <taxon>Hyphomicrobiales</taxon>
        <taxon>Brucellaceae</taxon>
        <taxon>Brucella/Ochrobactrum group</taxon>
        <taxon>Brucella</taxon>
    </lineage>
</organism>
<evidence type="ECO:0000255" key="1">
    <source>
        <dbReference type="HAMAP-Rule" id="MF_00258"/>
    </source>
</evidence>